<comment type="catalytic activity">
    <reaction evidence="1">
        <text>tRNA(Lys) + L-lysine + ATP = L-lysyl-tRNA(Lys) + AMP + diphosphate</text>
        <dbReference type="Rhea" id="RHEA:20792"/>
        <dbReference type="Rhea" id="RHEA-COMP:9696"/>
        <dbReference type="Rhea" id="RHEA-COMP:9697"/>
        <dbReference type="ChEBI" id="CHEBI:30616"/>
        <dbReference type="ChEBI" id="CHEBI:32551"/>
        <dbReference type="ChEBI" id="CHEBI:33019"/>
        <dbReference type="ChEBI" id="CHEBI:78442"/>
        <dbReference type="ChEBI" id="CHEBI:78529"/>
        <dbReference type="ChEBI" id="CHEBI:456215"/>
        <dbReference type="EC" id="6.1.1.6"/>
    </reaction>
</comment>
<comment type="cofactor">
    <cofactor evidence="1">
        <name>Mg(2+)</name>
        <dbReference type="ChEBI" id="CHEBI:18420"/>
    </cofactor>
    <text evidence="1">Binds 3 Mg(2+) ions per subunit.</text>
</comment>
<comment type="subunit">
    <text evidence="1">Homodimer.</text>
</comment>
<comment type="subcellular location">
    <subcellularLocation>
        <location evidence="1">Cytoplasm</location>
    </subcellularLocation>
</comment>
<comment type="similarity">
    <text evidence="1">Belongs to the class-II aminoacyl-tRNA synthetase family.</text>
</comment>
<name>SYK_CHRFK</name>
<keyword id="KW-0030">Aminoacyl-tRNA synthetase</keyword>
<keyword id="KW-0067">ATP-binding</keyword>
<keyword id="KW-0963">Cytoplasm</keyword>
<keyword id="KW-0436">Ligase</keyword>
<keyword id="KW-0460">Magnesium</keyword>
<keyword id="KW-0479">Metal-binding</keyword>
<keyword id="KW-0547">Nucleotide-binding</keyword>
<keyword id="KW-0648">Protein biosynthesis</keyword>
<organism>
    <name type="scientific">Christiangramia forsetii (strain DSM 17595 / CGMCC 1.15422 / KT0803)</name>
    <name type="common">Gramella forsetii</name>
    <dbReference type="NCBI Taxonomy" id="411154"/>
    <lineage>
        <taxon>Bacteria</taxon>
        <taxon>Pseudomonadati</taxon>
        <taxon>Bacteroidota</taxon>
        <taxon>Flavobacteriia</taxon>
        <taxon>Flavobacteriales</taxon>
        <taxon>Flavobacteriaceae</taxon>
        <taxon>Christiangramia</taxon>
    </lineage>
</organism>
<dbReference type="EC" id="6.1.1.6" evidence="1"/>
<dbReference type="EMBL" id="CU207366">
    <property type="protein sequence ID" value="CAL67873.1"/>
    <property type="molecule type" value="Genomic_DNA"/>
</dbReference>
<dbReference type="SMR" id="A0M5H8"/>
<dbReference type="STRING" id="411154.GFO_2926"/>
<dbReference type="KEGG" id="gfo:GFO_2926"/>
<dbReference type="eggNOG" id="COG1190">
    <property type="taxonomic scope" value="Bacteria"/>
</dbReference>
<dbReference type="HOGENOM" id="CLU_008255_6_0_10"/>
<dbReference type="OrthoDB" id="9801152at2"/>
<dbReference type="Proteomes" id="UP000000755">
    <property type="component" value="Chromosome"/>
</dbReference>
<dbReference type="GO" id="GO:0005829">
    <property type="term" value="C:cytosol"/>
    <property type="evidence" value="ECO:0007669"/>
    <property type="project" value="TreeGrafter"/>
</dbReference>
<dbReference type="GO" id="GO:0005524">
    <property type="term" value="F:ATP binding"/>
    <property type="evidence" value="ECO:0007669"/>
    <property type="project" value="UniProtKB-UniRule"/>
</dbReference>
<dbReference type="GO" id="GO:0004824">
    <property type="term" value="F:lysine-tRNA ligase activity"/>
    <property type="evidence" value="ECO:0007669"/>
    <property type="project" value="UniProtKB-UniRule"/>
</dbReference>
<dbReference type="GO" id="GO:0000287">
    <property type="term" value="F:magnesium ion binding"/>
    <property type="evidence" value="ECO:0007669"/>
    <property type="project" value="UniProtKB-UniRule"/>
</dbReference>
<dbReference type="GO" id="GO:0000049">
    <property type="term" value="F:tRNA binding"/>
    <property type="evidence" value="ECO:0007669"/>
    <property type="project" value="TreeGrafter"/>
</dbReference>
<dbReference type="GO" id="GO:0006430">
    <property type="term" value="P:lysyl-tRNA aminoacylation"/>
    <property type="evidence" value="ECO:0007669"/>
    <property type="project" value="UniProtKB-UniRule"/>
</dbReference>
<dbReference type="CDD" id="cd00775">
    <property type="entry name" value="LysRS_core"/>
    <property type="match status" value="1"/>
</dbReference>
<dbReference type="CDD" id="cd04322">
    <property type="entry name" value="LysRS_N"/>
    <property type="match status" value="1"/>
</dbReference>
<dbReference type="FunFam" id="2.40.50.140:FF:000024">
    <property type="entry name" value="Lysine--tRNA ligase"/>
    <property type="match status" value="1"/>
</dbReference>
<dbReference type="FunFam" id="3.30.930.10:FF:000238">
    <property type="entry name" value="Lysine--tRNA ligase"/>
    <property type="match status" value="1"/>
</dbReference>
<dbReference type="Gene3D" id="3.30.930.10">
    <property type="entry name" value="Bira Bifunctional Protein, Domain 2"/>
    <property type="match status" value="1"/>
</dbReference>
<dbReference type="Gene3D" id="2.40.50.140">
    <property type="entry name" value="Nucleic acid-binding proteins"/>
    <property type="match status" value="1"/>
</dbReference>
<dbReference type="HAMAP" id="MF_00252">
    <property type="entry name" value="Lys_tRNA_synth_class2"/>
    <property type="match status" value="1"/>
</dbReference>
<dbReference type="InterPro" id="IPR004364">
    <property type="entry name" value="Aa-tRNA-synt_II"/>
</dbReference>
<dbReference type="InterPro" id="IPR006195">
    <property type="entry name" value="aa-tRNA-synth_II"/>
</dbReference>
<dbReference type="InterPro" id="IPR045864">
    <property type="entry name" value="aa-tRNA-synth_II/BPL/LPL"/>
</dbReference>
<dbReference type="InterPro" id="IPR002313">
    <property type="entry name" value="Lys-tRNA-ligase_II"/>
</dbReference>
<dbReference type="InterPro" id="IPR044136">
    <property type="entry name" value="Lys-tRNA-ligase_II_N"/>
</dbReference>
<dbReference type="InterPro" id="IPR018149">
    <property type="entry name" value="Lys-tRNA-synth_II_C"/>
</dbReference>
<dbReference type="InterPro" id="IPR012340">
    <property type="entry name" value="NA-bd_OB-fold"/>
</dbReference>
<dbReference type="InterPro" id="IPR004365">
    <property type="entry name" value="NA-bd_OB_tRNA"/>
</dbReference>
<dbReference type="NCBIfam" id="TIGR00499">
    <property type="entry name" value="lysS_bact"/>
    <property type="match status" value="1"/>
</dbReference>
<dbReference type="NCBIfam" id="NF001756">
    <property type="entry name" value="PRK00484.1"/>
    <property type="match status" value="1"/>
</dbReference>
<dbReference type="PANTHER" id="PTHR42918:SF15">
    <property type="entry name" value="LYSINE--TRNA LIGASE, CHLOROPLASTIC_MITOCHONDRIAL"/>
    <property type="match status" value="1"/>
</dbReference>
<dbReference type="PANTHER" id="PTHR42918">
    <property type="entry name" value="LYSYL-TRNA SYNTHETASE"/>
    <property type="match status" value="1"/>
</dbReference>
<dbReference type="Pfam" id="PF00152">
    <property type="entry name" value="tRNA-synt_2"/>
    <property type="match status" value="1"/>
</dbReference>
<dbReference type="Pfam" id="PF01336">
    <property type="entry name" value="tRNA_anti-codon"/>
    <property type="match status" value="1"/>
</dbReference>
<dbReference type="PRINTS" id="PR00982">
    <property type="entry name" value="TRNASYNTHLYS"/>
</dbReference>
<dbReference type="SUPFAM" id="SSF55681">
    <property type="entry name" value="Class II aaRS and biotin synthetases"/>
    <property type="match status" value="1"/>
</dbReference>
<dbReference type="SUPFAM" id="SSF50249">
    <property type="entry name" value="Nucleic acid-binding proteins"/>
    <property type="match status" value="1"/>
</dbReference>
<dbReference type="PROSITE" id="PS50862">
    <property type="entry name" value="AA_TRNA_LIGASE_II"/>
    <property type="match status" value="1"/>
</dbReference>
<reference key="1">
    <citation type="journal article" date="2006" name="Environ. Microbiol.">
        <title>Whole genome analysis of the marine Bacteroidetes'Gramella forsetii' reveals adaptations to degradation of polymeric organic matter.</title>
        <authorList>
            <person name="Bauer M."/>
            <person name="Kube M."/>
            <person name="Teeling H."/>
            <person name="Richter M."/>
            <person name="Lombardot T."/>
            <person name="Allers E."/>
            <person name="Wuerdemann C.A."/>
            <person name="Quast C."/>
            <person name="Kuhl H."/>
            <person name="Knaust F."/>
            <person name="Woebken D."/>
            <person name="Bischof K."/>
            <person name="Mussmann M."/>
            <person name="Choudhuri J.V."/>
            <person name="Meyer F."/>
            <person name="Reinhardt R."/>
            <person name="Amann R.I."/>
            <person name="Gloeckner F.O."/>
        </authorList>
    </citation>
    <scope>NUCLEOTIDE SEQUENCE [LARGE SCALE GENOMIC DNA]</scope>
    <source>
        <strain>DSM 17595 / CGMCC 1.15422 / KT0803</strain>
    </source>
</reference>
<proteinExistence type="inferred from homology"/>
<accession>A0M5H8</accession>
<gene>
    <name evidence="1" type="primary">lysS</name>
    <name type="ordered locus">GFO_2926</name>
</gene>
<sequence>MHKKNYMQQLSEQEQIRRDKLTAIRKAGINPYPADLFPVDHTTTGIKENFEEGKNVVIAGRLMSRRIQGKASFAELQDSKGRIQVYFNRDEICTGEDKSKYNDLYKKLLDIGDFIGIEGELFKTQVGEMTVMVKDFHLLSKALRPLPLPKTDKEGNTHDGFNDPEQRYRQRYADLAVNPKVKEIFVKRTKLFNAMRNFFNEREYFEVETPILQSIPGGAAARPFVTHHNALDIPLYLRIANELYLKRLIVGGFDGVYEFSKNFRNEGMDRTHNPEFTAMEIYVAYKDYNWMMEFTEQLLEHCAEAVNGTTDATFGEHKINFKAPYKRLSMTDAIIEYTGFDITGKSEKELYEAAKGMDIEVDDTMGKGKLIDEIFGEKCEGKFIQPTFITDYPKEMSPLCKEHRDNPELTERFELMVCGKEIANAYSELNDPLDQRERFEEQLKLSEKGDDEAMFIDNDFLRSLEYGMPPTSGLGIGMDRLIMFLTNKQSIQEVLFFPQMKPEKKAVELSEEEKEVFKLLKNDSVHELNDIKEQSGLSNKKWDKAVKGLRKHKMIDVFKEGETLNMKIS</sequence>
<feature type="chain" id="PRO_1000125517" description="Lysine--tRNA ligase">
    <location>
        <begin position="1"/>
        <end position="569"/>
    </location>
</feature>
<feature type="binding site" evidence="1">
    <location>
        <position position="414"/>
    </location>
    <ligand>
        <name>Mg(2+)</name>
        <dbReference type="ChEBI" id="CHEBI:18420"/>
        <label>1</label>
    </ligand>
</feature>
<feature type="binding site" evidence="1">
    <location>
        <position position="421"/>
    </location>
    <ligand>
        <name>Mg(2+)</name>
        <dbReference type="ChEBI" id="CHEBI:18420"/>
        <label>1</label>
    </ligand>
</feature>
<feature type="binding site" evidence="1">
    <location>
        <position position="421"/>
    </location>
    <ligand>
        <name>Mg(2+)</name>
        <dbReference type="ChEBI" id="CHEBI:18420"/>
        <label>2</label>
    </ligand>
</feature>
<evidence type="ECO:0000255" key="1">
    <source>
        <dbReference type="HAMAP-Rule" id="MF_00252"/>
    </source>
</evidence>
<protein>
    <recommendedName>
        <fullName evidence="1">Lysine--tRNA ligase</fullName>
        <ecNumber evidence="1">6.1.1.6</ecNumber>
    </recommendedName>
    <alternativeName>
        <fullName evidence="1">Lysyl-tRNA synthetase</fullName>
        <shortName evidence="1">LysRS</shortName>
    </alternativeName>
</protein>